<gene>
    <name type="primary">rps4</name>
</gene>
<feature type="chain" id="PRO_0000228944" description="Small ribosomal subunit protein uS4c">
    <location>
        <begin position="1"/>
        <end position="201"/>
    </location>
</feature>
<feature type="domain" description="S4 RNA-binding">
    <location>
        <begin position="89"/>
        <end position="150"/>
    </location>
</feature>
<name>RR4_ACOCL</name>
<geneLocation type="chloroplast"/>
<proteinExistence type="inferred from homology"/>
<evidence type="ECO:0000250" key="1"/>
<evidence type="ECO:0000305" key="2"/>
<dbReference type="EMBL" id="AJ879453">
    <property type="protein sequence ID" value="CAI53796.1"/>
    <property type="molecule type" value="Genomic_DNA"/>
</dbReference>
<dbReference type="RefSeq" id="YP_319767.1">
    <property type="nucleotide sequence ID" value="NC_007407.1"/>
</dbReference>
<dbReference type="SMR" id="Q3V532"/>
<dbReference type="GeneID" id="3677461"/>
<dbReference type="GO" id="GO:0009507">
    <property type="term" value="C:chloroplast"/>
    <property type="evidence" value="ECO:0007669"/>
    <property type="project" value="UniProtKB-SubCell"/>
</dbReference>
<dbReference type="GO" id="GO:0015935">
    <property type="term" value="C:small ribosomal subunit"/>
    <property type="evidence" value="ECO:0007669"/>
    <property type="project" value="InterPro"/>
</dbReference>
<dbReference type="GO" id="GO:0019843">
    <property type="term" value="F:rRNA binding"/>
    <property type="evidence" value="ECO:0007669"/>
    <property type="project" value="UniProtKB-UniRule"/>
</dbReference>
<dbReference type="GO" id="GO:0003735">
    <property type="term" value="F:structural constituent of ribosome"/>
    <property type="evidence" value="ECO:0007669"/>
    <property type="project" value="InterPro"/>
</dbReference>
<dbReference type="GO" id="GO:0042274">
    <property type="term" value="P:ribosomal small subunit biogenesis"/>
    <property type="evidence" value="ECO:0007669"/>
    <property type="project" value="TreeGrafter"/>
</dbReference>
<dbReference type="GO" id="GO:0006412">
    <property type="term" value="P:translation"/>
    <property type="evidence" value="ECO:0007669"/>
    <property type="project" value="UniProtKB-UniRule"/>
</dbReference>
<dbReference type="CDD" id="cd00165">
    <property type="entry name" value="S4"/>
    <property type="match status" value="1"/>
</dbReference>
<dbReference type="FunFam" id="1.10.1050.10:FF:000002">
    <property type="entry name" value="30S ribosomal protein S4, chloroplastic"/>
    <property type="match status" value="1"/>
</dbReference>
<dbReference type="FunFam" id="3.10.290.10:FF:000081">
    <property type="entry name" value="30S ribosomal protein S4, chloroplastic"/>
    <property type="match status" value="1"/>
</dbReference>
<dbReference type="Gene3D" id="1.10.1050.10">
    <property type="entry name" value="Ribosomal Protein S4 Delta 41, Chain A, domain 1"/>
    <property type="match status" value="1"/>
</dbReference>
<dbReference type="Gene3D" id="3.10.290.10">
    <property type="entry name" value="RNA-binding S4 domain"/>
    <property type="match status" value="1"/>
</dbReference>
<dbReference type="HAMAP" id="MF_01306_B">
    <property type="entry name" value="Ribosomal_uS4_B"/>
    <property type="match status" value="1"/>
</dbReference>
<dbReference type="InterPro" id="IPR022801">
    <property type="entry name" value="Ribosomal_uS4"/>
</dbReference>
<dbReference type="InterPro" id="IPR005709">
    <property type="entry name" value="Ribosomal_uS4_bac-type"/>
</dbReference>
<dbReference type="InterPro" id="IPR018079">
    <property type="entry name" value="Ribosomal_uS4_CS"/>
</dbReference>
<dbReference type="InterPro" id="IPR001912">
    <property type="entry name" value="Ribosomal_uS4_N"/>
</dbReference>
<dbReference type="InterPro" id="IPR002942">
    <property type="entry name" value="S4_RNA-bd"/>
</dbReference>
<dbReference type="InterPro" id="IPR036986">
    <property type="entry name" value="S4_RNA-bd_sf"/>
</dbReference>
<dbReference type="NCBIfam" id="NF003717">
    <property type="entry name" value="PRK05327.1"/>
    <property type="match status" value="1"/>
</dbReference>
<dbReference type="NCBIfam" id="TIGR01017">
    <property type="entry name" value="rpsD_bact"/>
    <property type="match status" value="1"/>
</dbReference>
<dbReference type="PANTHER" id="PTHR11831">
    <property type="entry name" value="30S 40S RIBOSOMAL PROTEIN"/>
    <property type="match status" value="1"/>
</dbReference>
<dbReference type="PANTHER" id="PTHR11831:SF4">
    <property type="entry name" value="SMALL RIBOSOMAL SUBUNIT PROTEIN US4M"/>
    <property type="match status" value="1"/>
</dbReference>
<dbReference type="Pfam" id="PF00163">
    <property type="entry name" value="Ribosomal_S4"/>
    <property type="match status" value="1"/>
</dbReference>
<dbReference type="Pfam" id="PF01479">
    <property type="entry name" value="S4"/>
    <property type="match status" value="1"/>
</dbReference>
<dbReference type="SMART" id="SM01390">
    <property type="entry name" value="Ribosomal_S4"/>
    <property type="match status" value="1"/>
</dbReference>
<dbReference type="SMART" id="SM00363">
    <property type="entry name" value="S4"/>
    <property type="match status" value="1"/>
</dbReference>
<dbReference type="SUPFAM" id="SSF55174">
    <property type="entry name" value="Alpha-L RNA-binding motif"/>
    <property type="match status" value="1"/>
</dbReference>
<dbReference type="PROSITE" id="PS00632">
    <property type="entry name" value="RIBOSOMAL_S4"/>
    <property type="match status" value="1"/>
</dbReference>
<dbReference type="PROSITE" id="PS50889">
    <property type="entry name" value="S4"/>
    <property type="match status" value="1"/>
</dbReference>
<sequence length="201" mass="23351">MSRYRGPRLKKIRRLGALPGLTSKGTRPGSDLRNQFRSGKRSQYRIRLEEKQKLRFHYGLTERQLLRYVHIAGKAKGSTGQVLLQLLEMRLDNILFRLGMAPTIPGARQLVNHRHILVNGRIVDIPSYRCKPRDIITTKDKQRSKVLIQNNMDSSTREELPKHLTLDSFQHKGLVNQIIDSKWVGLKINELLVVEYYSRQT</sequence>
<accession>Q3V532</accession>
<protein>
    <recommendedName>
        <fullName evidence="2">Small ribosomal subunit protein uS4c</fullName>
    </recommendedName>
    <alternativeName>
        <fullName>30S ribosomal protein S4, chloroplastic</fullName>
    </alternativeName>
</protein>
<comment type="function">
    <text evidence="1">One of the primary rRNA binding proteins, it binds directly to 16S rRNA where it nucleates assembly of the body of the 30S subunit.</text>
</comment>
<comment type="function">
    <text evidence="1">With S5 and S12 plays an important role in translational accuracy.</text>
</comment>
<comment type="subunit">
    <text evidence="1">Part of the 30S ribosomal subunit. Contacts protein S5. The interaction surface between S4 and S5 is involved in control of translational fidelity (By similarity).</text>
</comment>
<comment type="subcellular location">
    <subcellularLocation>
        <location>Plastid</location>
        <location>Chloroplast</location>
    </subcellularLocation>
</comment>
<comment type="similarity">
    <text evidence="2">Belongs to the universal ribosomal protein uS4 family.</text>
</comment>
<keyword id="KW-0150">Chloroplast</keyword>
<keyword id="KW-0934">Plastid</keyword>
<keyword id="KW-0687">Ribonucleoprotein</keyword>
<keyword id="KW-0689">Ribosomal protein</keyword>
<keyword id="KW-0694">RNA-binding</keyword>
<keyword id="KW-0699">rRNA-binding</keyword>
<organism>
    <name type="scientific">Acorus calamus</name>
    <name type="common">Sweet flag</name>
    <dbReference type="NCBI Taxonomy" id="4465"/>
    <lineage>
        <taxon>Eukaryota</taxon>
        <taxon>Viridiplantae</taxon>
        <taxon>Streptophyta</taxon>
        <taxon>Embryophyta</taxon>
        <taxon>Tracheophyta</taxon>
        <taxon>Spermatophyta</taxon>
        <taxon>Magnoliopsida</taxon>
        <taxon>Liliopsida</taxon>
        <taxon>Acoraceae</taxon>
        <taxon>Acorus</taxon>
    </lineage>
</organism>
<reference key="1">
    <citation type="journal article" date="2005" name="Mol. Biol. Evol.">
        <title>Analysis of Acorus calamus chloroplast genome and its phylogenetic implications.</title>
        <authorList>
            <person name="Goremykin V.V."/>
            <person name="Holland B."/>
            <person name="Hirsch-Ernst K.I."/>
            <person name="Hellwig F.H."/>
        </authorList>
    </citation>
    <scope>NUCLEOTIDE SEQUENCE [LARGE SCALE GENOMIC DNA]</scope>
</reference>